<proteinExistence type="inferred from homology"/>
<reference key="1">
    <citation type="journal article" date="2009" name="PLoS Genet.">
        <title>Organised genome dynamics in the Escherichia coli species results in highly diverse adaptive paths.</title>
        <authorList>
            <person name="Touchon M."/>
            <person name="Hoede C."/>
            <person name="Tenaillon O."/>
            <person name="Barbe V."/>
            <person name="Baeriswyl S."/>
            <person name="Bidet P."/>
            <person name="Bingen E."/>
            <person name="Bonacorsi S."/>
            <person name="Bouchier C."/>
            <person name="Bouvet O."/>
            <person name="Calteau A."/>
            <person name="Chiapello H."/>
            <person name="Clermont O."/>
            <person name="Cruveiller S."/>
            <person name="Danchin A."/>
            <person name="Diard M."/>
            <person name="Dossat C."/>
            <person name="Karoui M.E."/>
            <person name="Frapy E."/>
            <person name="Garry L."/>
            <person name="Ghigo J.M."/>
            <person name="Gilles A.M."/>
            <person name="Johnson J."/>
            <person name="Le Bouguenec C."/>
            <person name="Lescat M."/>
            <person name="Mangenot S."/>
            <person name="Martinez-Jehanne V."/>
            <person name="Matic I."/>
            <person name="Nassif X."/>
            <person name="Oztas S."/>
            <person name="Petit M.A."/>
            <person name="Pichon C."/>
            <person name="Rouy Z."/>
            <person name="Ruf C.S."/>
            <person name="Schneider D."/>
            <person name="Tourret J."/>
            <person name="Vacherie B."/>
            <person name="Vallenet D."/>
            <person name="Medigue C."/>
            <person name="Rocha E.P.C."/>
            <person name="Denamur E."/>
        </authorList>
    </citation>
    <scope>NUCLEOTIDE SEQUENCE [LARGE SCALE GENOMIC DNA]</scope>
    <source>
        <strain>IAI39 / ExPEC</strain>
    </source>
</reference>
<comment type="function">
    <text evidence="1">Transferase that catalyzes the transfer of sulfur from thiosulfate to thiophilic acceptors such as cyanide or dithiols. May function in a CysM-independent thiosulfate assimilation pathway by catalyzing the conversion of thiosulfate to sulfite, which can then be used for L-cysteine biosynthesis.</text>
</comment>
<comment type="catalytic activity">
    <reaction evidence="1">
        <text>thiosulfate + hydrogen cyanide = thiocyanate + sulfite + 2 H(+)</text>
        <dbReference type="Rhea" id="RHEA:16881"/>
        <dbReference type="ChEBI" id="CHEBI:15378"/>
        <dbReference type="ChEBI" id="CHEBI:17359"/>
        <dbReference type="ChEBI" id="CHEBI:18022"/>
        <dbReference type="ChEBI" id="CHEBI:18407"/>
        <dbReference type="ChEBI" id="CHEBI:33542"/>
        <dbReference type="EC" id="2.8.1.1"/>
    </reaction>
</comment>
<comment type="catalytic activity">
    <reaction evidence="1">
        <text>thiosulfate + [thioredoxin]-dithiol = [thioredoxin]-disulfide + hydrogen sulfide + sulfite + 2 H(+)</text>
        <dbReference type="Rhea" id="RHEA:83859"/>
        <dbReference type="Rhea" id="RHEA-COMP:10698"/>
        <dbReference type="Rhea" id="RHEA-COMP:10700"/>
        <dbReference type="ChEBI" id="CHEBI:15378"/>
        <dbReference type="ChEBI" id="CHEBI:17359"/>
        <dbReference type="ChEBI" id="CHEBI:29919"/>
        <dbReference type="ChEBI" id="CHEBI:29950"/>
        <dbReference type="ChEBI" id="CHEBI:33542"/>
        <dbReference type="ChEBI" id="CHEBI:50058"/>
    </reaction>
</comment>
<comment type="subcellular location">
    <subcellularLocation>
        <location evidence="1">Cytoplasm</location>
    </subcellularLocation>
</comment>
<comment type="similarity">
    <text evidence="1">Belongs to the GlpE family.</text>
</comment>
<feature type="chain" id="PRO_1000134850" description="Thiosulfate sulfurtransferase GlpE">
    <location>
        <begin position="1"/>
        <end position="108"/>
    </location>
</feature>
<feature type="domain" description="Rhodanese" evidence="1">
    <location>
        <begin position="17"/>
        <end position="105"/>
    </location>
</feature>
<feature type="active site" description="Cysteine persulfide intermediate" evidence="1">
    <location>
        <position position="65"/>
    </location>
</feature>
<evidence type="ECO:0000255" key="1">
    <source>
        <dbReference type="HAMAP-Rule" id="MF_01009"/>
    </source>
</evidence>
<name>GLPE_ECO7I</name>
<sequence length="108" mass="12054">MDQFECINVADAHQKLQEKEAVLVDIRDPQSFAMGHAAQAFHLTNDTLGAFMRDNDFDTPVMVMCYHGNSSKGAAQYLLQQGYDVVYSIDGGFEAWQRQFPAEVAYGA</sequence>
<keyword id="KW-0963">Cytoplasm</keyword>
<keyword id="KW-0808">Transferase</keyword>
<dbReference type="EC" id="2.8.1.1" evidence="1"/>
<dbReference type="EMBL" id="CU928164">
    <property type="protein sequence ID" value="CAR20017.1"/>
    <property type="molecule type" value="Genomic_DNA"/>
</dbReference>
<dbReference type="RefSeq" id="WP_000371924.1">
    <property type="nucleotide sequence ID" value="NC_011750.1"/>
</dbReference>
<dbReference type="RefSeq" id="YP_002409798.1">
    <property type="nucleotide sequence ID" value="NC_011750.1"/>
</dbReference>
<dbReference type="SMR" id="B7NMI9"/>
<dbReference type="STRING" id="585057.ECIAI39_3905"/>
<dbReference type="KEGG" id="ect:ECIAI39_3905"/>
<dbReference type="PATRIC" id="fig|585057.6.peg.4043"/>
<dbReference type="HOGENOM" id="CLU_089574_14_0_6"/>
<dbReference type="Proteomes" id="UP000000749">
    <property type="component" value="Chromosome"/>
</dbReference>
<dbReference type="GO" id="GO:0005737">
    <property type="term" value="C:cytoplasm"/>
    <property type="evidence" value="ECO:0007669"/>
    <property type="project" value="UniProtKB-SubCell"/>
</dbReference>
<dbReference type="GO" id="GO:0004792">
    <property type="term" value="F:thiosulfate-cyanide sulfurtransferase activity"/>
    <property type="evidence" value="ECO:0007669"/>
    <property type="project" value="UniProtKB-UniRule"/>
</dbReference>
<dbReference type="GO" id="GO:0006071">
    <property type="term" value="P:glycerol metabolic process"/>
    <property type="evidence" value="ECO:0007669"/>
    <property type="project" value="UniProtKB-UniRule"/>
</dbReference>
<dbReference type="CDD" id="cd01444">
    <property type="entry name" value="GlpE_ST"/>
    <property type="match status" value="1"/>
</dbReference>
<dbReference type="FunFam" id="3.40.250.10:FF:000007">
    <property type="entry name" value="Thiosulfate sulfurtransferase GlpE"/>
    <property type="match status" value="1"/>
</dbReference>
<dbReference type="Gene3D" id="3.40.250.10">
    <property type="entry name" value="Rhodanese-like domain"/>
    <property type="match status" value="1"/>
</dbReference>
<dbReference type="HAMAP" id="MF_01009">
    <property type="entry name" value="Thiosulf_sulfurtr"/>
    <property type="match status" value="1"/>
</dbReference>
<dbReference type="InterPro" id="IPR050229">
    <property type="entry name" value="GlpE_sulfurtransferase"/>
</dbReference>
<dbReference type="InterPro" id="IPR001763">
    <property type="entry name" value="Rhodanese-like_dom"/>
</dbReference>
<dbReference type="InterPro" id="IPR036873">
    <property type="entry name" value="Rhodanese-like_dom_sf"/>
</dbReference>
<dbReference type="InterPro" id="IPR023695">
    <property type="entry name" value="Thiosulf_sulfurTrfase"/>
</dbReference>
<dbReference type="NCBIfam" id="NF001195">
    <property type="entry name" value="PRK00162.1"/>
    <property type="match status" value="1"/>
</dbReference>
<dbReference type="PANTHER" id="PTHR43031">
    <property type="entry name" value="FAD-DEPENDENT OXIDOREDUCTASE"/>
    <property type="match status" value="1"/>
</dbReference>
<dbReference type="PANTHER" id="PTHR43031:SF6">
    <property type="entry name" value="THIOSULFATE SULFURTRANSFERASE GLPE"/>
    <property type="match status" value="1"/>
</dbReference>
<dbReference type="Pfam" id="PF00581">
    <property type="entry name" value="Rhodanese"/>
    <property type="match status" value="1"/>
</dbReference>
<dbReference type="SMART" id="SM00450">
    <property type="entry name" value="RHOD"/>
    <property type="match status" value="1"/>
</dbReference>
<dbReference type="SUPFAM" id="SSF52821">
    <property type="entry name" value="Rhodanese/Cell cycle control phosphatase"/>
    <property type="match status" value="1"/>
</dbReference>
<dbReference type="PROSITE" id="PS50206">
    <property type="entry name" value="RHODANESE_3"/>
    <property type="match status" value="1"/>
</dbReference>
<organism>
    <name type="scientific">Escherichia coli O7:K1 (strain IAI39 / ExPEC)</name>
    <dbReference type="NCBI Taxonomy" id="585057"/>
    <lineage>
        <taxon>Bacteria</taxon>
        <taxon>Pseudomonadati</taxon>
        <taxon>Pseudomonadota</taxon>
        <taxon>Gammaproteobacteria</taxon>
        <taxon>Enterobacterales</taxon>
        <taxon>Enterobacteriaceae</taxon>
        <taxon>Escherichia</taxon>
    </lineage>
</organism>
<protein>
    <recommendedName>
        <fullName evidence="1">Thiosulfate sulfurtransferase GlpE</fullName>
        <ecNumber evidence="1">2.8.1.1</ecNumber>
    </recommendedName>
</protein>
<accession>B7NMI9</accession>
<gene>
    <name evidence="1" type="primary">glpE</name>
    <name type="ordered locus">ECIAI39_3905</name>
</gene>